<dbReference type="EMBL" id="X69109">
    <property type="status" value="NOT_ANNOTATED_CDS"/>
    <property type="molecule type" value="Genomic_DNA"/>
</dbReference>
<dbReference type="EMBL" id="U00096">
    <property type="protein sequence ID" value="AAC74731.1"/>
    <property type="molecule type" value="Genomic_DNA"/>
</dbReference>
<dbReference type="EMBL" id="AP009048">
    <property type="protein sequence ID" value="BAA15425.2"/>
    <property type="molecule type" value="Genomic_DNA"/>
</dbReference>
<dbReference type="EMBL" id="X51368">
    <property type="status" value="NOT_ANNOTATED_CDS"/>
    <property type="molecule type" value="Genomic_DNA"/>
</dbReference>
<dbReference type="PIR" id="E64923">
    <property type="entry name" value="E64923"/>
</dbReference>
<dbReference type="RefSeq" id="NP_416176.1">
    <property type="nucleotide sequence ID" value="NC_000913.3"/>
</dbReference>
<dbReference type="SMR" id="P0ACR2"/>
<dbReference type="BioGRID" id="4262908">
    <property type="interactions" value="111"/>
</dbReference>
<dbReference type="FunCoup" id="P0ACR2">
    <property type="interactions" value="36"/>
</dbReference>
<dbReference type="IntAct" id="P0ACR2">
    <property type="interactions" value="5"/>
</dbReference>
<dbReference type="STRING" id="511145.b1659"/>
<dbReference type="PaxDb" id="511145-b1659"/>
<dbReference type="EnsemblBacteria" id="AAC74731">
    <property type="protein sequence ID" value="AAC74731"/>
    <property type="gene ID" value="b1659"/>
</dbReference>
<dbReference type="GeneID" id="945208"/>
<dbReference type="KEGG" id="ecj:JW1651"/>
<dbReference type="KEGG" id="eco:b1659"/>
<dbReference type="KEGG" id="ecoc:C3026_09520"/>
<dbReference type="PATRIC" id="fig|1411691.4.peg.598"/>
<dbReference type="EchoBASE" id="EB2061"/>
<dbReference type="eggNOG" id="COG0583">
    <property type="taxonomic scope" value="Bacteria"/>
</dbReference>
<dbReference type="HOGENOM" id="CLU_039613_35_1_6"/>
<dbReference type="InParanoid" id="P0ACR2"/>
<dbReference type="OMA" id="PKRTTWL"/>
<dbReference type="OrthoDB" id="5293066at2"/>
<dbReference type="PhylomeDB" id="P0ACR2"/>
<dbReference type="BioCyc" id="EcoCyc:EG12140-MONOMER"/>
<dbReference type="PRO" id="PR:P0ACR2"/>
<dbReference type="Proteomes" id="UP000000625">
    <property type="component" value="Chromosome"/>
</dbReference>
<dbReference type="GO" id="GO:0003700">
    <property type="term" value="F:DNA-binding transcription factor activity"/>
    <property type="evidence" value="ECO:0007669"/>
    <property type="project" value="InterPro"/>
</dbReference>
<dbReference type="GO" id="GO:0000976">
    <property type="term" value="F:transcription cis-regulatory region binding"/>
    <property type="evidence" value="ECO:0000318"/>
    <property type="project" value="GO_Central"/>
</dbReference>
<dbReference type="GO" id="GO:0006355">
    <property type="term" value="P:regulation of DNA-templated transcription"/>
    <property type="evidence" value="ECO:0000318"/>
    <property type="project" value="GO_Central"/>
</dbReference>
<dbReference type="FunFam" id="1.10.10.10:FF:000001">
    <property type="entry name" value="LysR family transcriptional regulator"/>
    <property type="match status" value="1"/>
</dbReference>
<dbReference type="Gene3D" id="3.40.190.10">
    <property type="entry name" value="Periplasmic binding protein-like II"/>
    <property type="match status" value="2"/>
</dbReference>
<dbReference type="Gene3D" id="1.10.10.10">
    <property type="entry name" value="Winged helix-like DNA-binding domain superfamily/Winged helix DNA-binding domain"/>
    <property type="match status" value="1"/>
</dbReference>
<dbReference type="InterPro" id="IPR005119">
    <property type="entry name" value="LysR_subst-bd"/>
</dbReference>
<dbReference type="InterPro" id="IPR000847">
    <property type="entry name" value="Tscrpt_reg_HTH_LysR"/>
</dbReference>
<dbReference type="InterPro" id="IPR036388">
    <property type="entry name" value="WH-like_DNA-bd_sf"/>
</dbReference>
<dbReference type="InterPro" id="IPR036390">
    <property type="entry name" value="WH_DNA-bd_sf"/>
</dbReference>
<dbReference type="NCBIfam" id="NF008294">
    <property type="entry name" value="PRK11074.1"/>
    <property type="match status" value="1"/>
</dbReference>
<dbReference type="PANTHER" id="PTHR30126">
    <property type="entry name" value="HTH-TYPE TRANSCRIPTIONAL REGULATOR"/>
    <property type="match status" value="1"/>
</dbReference>
<dbReference type="PANTHER" id="PTHR30126:SF18">
    <property type="entry name" value="LYSR FAMILY TRANSCRIPTIONAL REGULATOR"/>
    <property type="match status" value="1"/>
</dbReference>
<dbReference type="Pfam" id="PF00126">
    <property type="entry name" value="HTH_1"/>
    <property type="match status" value="1"/>
</dbReference>
<dbReference type="Pfam" id="PF03466">
    <property type="entry name" value="LysR_substrate"/>
    <property type="match status" value="1"/>
</dbReference>
<dbReference type="SUPFAM" id="SSF53850">
    <property type="entry name" value="Periplasmic binding protein-like II"/>
    <property type="match status" value="1"/>
</dbReference>
<dbReference type="SUPFAM" id="SSF46785">
    <property type="entry name" value="Winged helix' DNA-binding domain"/>
    <property type="match status" value="1"/>
</dbReference>
<dbReference type="PROSITE" id="PS50931">
    <property type="entry name" value="HTH_LYSR"/>
    <property type="match status" value="1"/>
</dbReference>
<evidence type="ECO:0000255" key="1">
    <source>
        <dbReference type="PROSITE-ProRule" id="PRU00253"/>
    </source>
</evidence>
<evidence type="ECO:0000269" key="2">
    <source>
    </source>
</evidence>
<evidence type="ECO:0000303" key="3">
    <source>
    </source>
</evidence>
<evidence type="ECO:0000305" key="4"/>
<proteinExistence type="evidence at protein level"/>
<comment type="function">
    <text evidence="2">Transcriptional regulator that activates the expression of punC, which encodes a purine nucleoside transporter (PubMed:34413462). In the presence of adenine, it binds to a conserved 23-bp palindromic motif in the intergenic region between punR and punC (PubMed:34413462).</text>
</comment>
<comment type="subcellular location">
    <subcellularLocation>
        <location evidence="4">Cytoplasm</location>
    </subcellularLocation>
</comment>
<comment type="disruption phenotype">
    <text evidence="2">The deletion of the gene leads to a substantially decreased growth rate in minimal medium with adenosine, inosine or guanosine as the nitrogen source.</text>
</comment>
<comment type="similarity">
    <text evidence="4">Belongs to the LysR transcriptional regulatory family.</text>
</comment>
<name>PUNR_ECOLI</name>
<keyword id="KW-0010">Activator</keyword>
<keyword id="KW-0963">Cytoplasm</keyword>
<keyword id="KW-0238">DNA-binding</keyword>
<keyword id="KW-1185">Reference proteome</keyword>
<keyword id="KW-0804">Transcription</keyword>
<keyword id="KW-0805">Transcription regulation</keyword>
<protein>
    <recommendedName>
        <fullName evidence="4">HTH-type transcriptional regulator PunR</fullName>
    </recommendedName>
</protein>
<reference key="1">
    <citation type="journal article" date="1996" name="Eur. J. Biochem.">
        <title>Cloning, sequencing, mapping and hyperexpression of the ribC gene coding for riboflavin synthase of Escherichia coli.</title>
        <authorList>
            <person name="Eberhardt S.M.R."/>
            <person name="Richter G."/>
            <person name="Gimbel W."/>
            <person name="Werner T."/>
            <person name="Bacher A."/>
        </authorList>
    </citation>
    <scope>NUCLEOTIDE SEQUENCE [GENOMIC DNA]</scope>
    <source>
        <strain>K12 / RR28</strain>
    </source>
</reference>
<reference key="2">
    <citation type="journal article" date="1996" name="DNA Res.">
        <title>A 570-kb DNA sequence of the Escherichia coli K-12 genome corresponding to the 28.0-40.1 min region on the linkage map.</title>
        <authorList>
            <person name="Aiba H."/>
            <person name="Baba T."/>
            <person name="Fujita K."/>
            <person name="Hayashi K."/>
            <person name="Inada T."/>
            <person name="Isono K."/>
            <person name="Itoh T."/>
            <person name="Kasai H."/>
            <person name="Kashimoto K."/>
            <person name="Kimura S."/>
            <person name="Kitakawa M."/>
            <person name="Kitagawa M."/>
            <person name="Makino K."/>
            <person name="Miki T."/>
            <person name="Mizobuchi K."/>
            <person name="Mori H."/>
            <person name="Mori T."/>
            <person name="Motomura K."/>
            <person name="Nakade S."/>
            <person name="Nakamura Y."/>
            <person name="Nashimoto H."/>
            <person name="Nishio Y."/>
            <person name="Oshima T."/>
            <person name="Saito N."/>
            <person name="Sampei G."/>
            <person name="Seki Y."/>
            <person name="Sivasundaram S."/>
            <person name="Tagami H."/>
            <person name="Takeda J."/>
            <person name="Takemoto K."/>
            <person name="Takeuchi Y."/>
            <person name="Wada C."/>
            <person name="Yamamoto Y."/>
            <person name="Horiuchi T."/>
        </authorList>
    </citation>
    <scope>NUCLEOTIDE SEQUENCE [LARGE SCALE GENOMIC DNA]</scope>
    <source>
        <strain>K12 / W3110 / ATCC 27325 / DSM 5911</strain>
    </source>
</reference>
<reference key="3">
    <citation type="journal article" date="1997" name="Science">
        <title>The complete genome sequence of Escherichia coli K-12.</title>
        <authorList>
            <person name="Blattner F.R."/>
            <person name="Plunkett G. III"/>
            <person name="Bloch C.A."/>
            <person name="Perna N.T."/>
            <person name="Burland V."/>
            <person name="Riley M."/>
            <person name="Collado-Vides J."/>
            <person name="Glasner J.D."/>
            <person name="Rode C.K."/>
            <person name="Mayhew G.F."/>
            <person name="Gregor J."/>
            <person name="Davis N.W."/>
            <person name="Kirkpatrick H.A."/>
            <person name="Goeden M.A."/>
            <person name="Rose D.J."/>
            <person name="Mau B."/>
            <person name="Shao Y."/>
        </authorList>
    </citation>
    <scope>NUCLEOTIDE SEQUENCE [LARGE SCALE GENOMIC DNA]</scope>
    <source>
        <strain>K12 / MG1655 / ATCC 47076</strain>
    </source>
</reference>
<reference key="4">
    <citation type="journal article" date="2006" name="Mol. Syst. Biol.">
        <title>Highly accurate genome sequences of Escherichia coli K-12 strains MG1655 and W3110.</title>
        <authorList>
            <person name="Hayashi K."/>
            <person name="Morooka N."/>
            <person name="Yamamoto Y."/>
            <person name="Fujita K."/>
            <person name="Isono K."/>
            <person name="Choi S."/>
            <person name="Ohtsubo E."/>
            <person name="Baba T."/>
            <person name="Wanner B.L."/>
            <person name="Mori H."/>
            <person name="Horiuchi T."/>
        </authorList>
    </citation>
    <scope>NUCLEOTIDE SEQUENCE [LARGE SCALE GENOMIC DNA]</scope>
    <scope>SEQUENCE REVISION TO 253</scope>
    <source>
        <strain>K12 / W3110 / ATCC 27325 / DSM 5911</strain>
    </source>
</reference>
<reference key="5">
    <citation type="journal article" date="1990" name="Eur. J. Biochem.">
        <title>Autoregulation of PurR repressor synthesis and involvement of purR in the regulation of purB, purC, purL, purMN and guaBA expression in Escherichia coli.</title>
        <authorList>
            <person name="Meng L.M."/>
            <person name="Kilstrup M."/>
            <person name="Nygaard P."/>
        </authorList>
    </citation>
    <scope>NUCLEOTIDE SEQUENCE [GENOMIC DNA] OF 106-310</scope>
    <source>
        <strain>K12</strain>
    </source>
</reference>
<reference key="6">
    <citation type="unpublished observations" date="1994-02">
        <authorList>
            <person name="Rudd K.E."/>
        </authorList>
    </citation>
    <scope>IDENTIFICATION</scope>
</reference>
<reference key="7">
    <citation type="journal article" date="2021" name="Commun. Biol.">
        <title>Identification of a transcription factor, PunR, that regulates the purine and purine nucleoside transporter punC in E. coli.</title>
        <authorList>
            <person name="Rodionova I.A."/>
            <person name="Gao Y."/>
            <person name="Sastry A."/>
            <person name="Hefner Y."/>
            <person name="Lim H.G."/>
            <person name="Rodionov D.A."/>
            <person name="Saier M.H. Jr."/>
            <person name="Palsson B.O."/>
        </authorList>
    </citation>
    <scope>FUNCTION</scope>
    <scope>DNA-BINDING</scope>
    <scope>DISRUPTION PHENOTYPE</scope>
    <source>
        <strain>K12</strain>
    </source>
</reference>
<gene>
    <name evidence="3" type="primary">punR</name>
    <name type="synonym">ydhB</name>
    <name type="ordered locus">b1659</name>
    <name type="ordered locus">JW1651</name>
</gene>
<organism>
    <name type="scientific">Escherichia coli (strain K12)</name>
    <dbReference type="NCBI Taxonomy" id="83333"/>
    <lineage>
        <taxon>Bacteria</taxon>
        <taxon>Pseudomonadati</taxon>
        <taxon>Pseudomonadota</taxon>
        <taxon>Gammaproteobacteria</taxon>
        <taxon>Enterobacterales</taxon>
        <taxon>Enterobacteriaceae</taxon>
        <taxon>Escherichia</taxon>
    </lineage>
</organism>
<feature type="chain" id="PRO_0000105784" description="HTH-type transcriptional regulator PunR">
    <location>
        <begin position="1"/>
        <end position="310"/>
    </location>
</feature>
<feature type="domain" description="HTH lysR-type" evidence="1">
    <location>
        <begin position="2"/>
        <end position="59"/>
    </location>
</feature>
<feature type="DNA-binding region" description="H-T-H motif" evidence="1">
    <location>
        <begin position="19"/>
        <end position="38"/>
    </location>
</feature>
<feature type="sequence conflict" description="In Ref. 2." evidence="4" ref="2">
    <original>K</original>
    <variation>E</variation>
    <location>
        <position position="253"/>
    </location>
</feature>
<sequence length="310" mass="35250">MWSEYSLEVVDAVARNGSFSAAAQELHRVPSAVSYTVRQLEEWLAVPLFERRHRDVELTAAGAWFLKEGRSVVKKMQITRQQCQQIANGWRGQLAIAVDNIVRPERTRQMIVDFYRHFDDVELLVFQEVFNGVWDALSDGRVELAIGATRAIPVGGRYAFRDMGMLSWSCVVASHHPLALMDGPFSDDTLRNWPSLVREDTSRTLPKRITWLLDNQKRVVVPDWESSATCISAGLCIGMVPTHFAKPWLNEGKWVALELENPFPDSACCLTWQQNDMSPALTWLLEYLGDSETLNKEWLREPEETPATGD</sequence>
<accession>P0ACR2</accession>
<accession>P37598</accession>
<accession>P77677</accession>